<keyword id="KW-1003">Cell membrane</keyword>
<keyword id="KW-0472">Membrane</keyword>
<keyword id="KW-0520">NAD</keyword>
<keyword id="KW-0874">Quinone</keyword>
<keyword id="KW-1185">Reference proteome</keyword>
<keyword id="KW-1278">Translocase</keyword>
<keyword id="KW-0812">Transmembrane</keyword>
<keyword id="KW-1133">Transmembrane helix</keyword>
<keyword id="KW-0830">Ubiquinone</keyword>
<comment type="function">
    <text evidence="1">NDH-1 shuttles electrons from NADH, via FMN and iron-sulfur (Fe-S) centers, to quinones in the respiratory chain. The immediate electron acceptor for the enzyme in this species is believed to be ubiquinone. Couples the redox reaction to proton translocation (for every two electrons transferred, four hydrogen ions are translocated across the cytoplasmic membrane), and thus conserves the redox energy in a proton gradient. This subunit may bind ubiquinone.</text>
</comment>
<comment type="catalytic activity">
    <reaction evidence="1">
        <text>a quinone + NADH + 5 H(+)(in) = a quinol + NAD(+) + 4 H(+)(out)</text>
        <dbReference type="Rhea" id="RHEA:57888"/>
        <dbReference type="ChEBI" id="CHEBI:15378"/>
        <dbReference type="ChEBI" id="CHEBI:24646"/>
        <dbReference type="ChEBI" id="CHEBI:57540"/>
        <dbReference type="ChEBI" id="CHEBI:57945"/>
        <dbReference type="ChEBI" id="CHEBI:132124"/>
    </reaction>
</comment>
<comment type="subunit">
    <text evidence="1">NDH-1 is composed of 14 different subunits. Subunits NuoA, H, J, K, L, M, N constitute the membrane sector of the complex.</text>
</comment>
<comment type="subcellular location">
    <subcellularLocation>
        <location evidence="1">Cell membrane</location>
        <topology evidence="1">Multi-pass membrane protein</topology>
    </subcellularLocation>
</comment>
<comment type="similarity">
    <text evidence="1">Belongs to the complex I subunit 1 family.</text>
</comment>
<gene>
    <name evidence="1" type="primary">nuoH</name>
    <name type="ordered locus">SCO4569</name>
    <name type="ORF">SCD16A.14c</name>
</gene>
<feature type="chain" id="PRO_0000240112" description="NADH-quinone oxidoreductase subunit H">
    <location>
        <begin position="1"/>
        <end position="467"/>
    </location>
</feature>
<feature type="transmembrane region" description="Helical" evidence="1">
    <location>
        <begin position="18"/>
        <end position="38"/>
    </location>
</feature>
<feature type="transmembrane region" description="Helical" evidence="1">
    <location>
        <begin position="88"/>
        <end position="108"/>
    </location>
</feature>
<feature type="transmembrane region" description="Helical" evidence="1">
    <location>
        <begin position="131"/>
        <end position="151"/>
    </location>
</feature>
<feature type="transmembrane region" description="Helical" evidence="1">
    <location>
        <begin position="172"/>
        <end position="192"/>
    </location>
</feature>
<feature type="transmembrane region" description="Helical" evidence="1">
    <location>
        <begin position="206"/>
        <end position="226"/>
    </location>
</feature>
<feature type="transmembrane region" description="Helical" evidence="1">
    <location>
        <begin position="256"/>
        <end position="276"/>
    </location>
</feature>
<feature type="transmembrane region" description="Helical" evidence="1">
    <location>
        <begin position="296"/>
        <end position="316"/>
    </location>
</feature>
<feature type="transmembrane region" description="Helical" evidence="1">
    <location>
        <begin position="328"/>
        <end position="348"/>
    </location>
</feature>
<feature type="transmembrane region" description="Helical" evidence="1">
    <location>
        <begin position="363"/>
        <end position="383"/>
    </location>
</feature>
<feature type="region of interest" description="Disordered" evidence="2">
    <location>
        <begin position="389"/>
        <end position="467"/>
    </location>
</feature>
<feature type="compositionally biased region" description="Pro residues" evidence="2">
    <location>
        <begin position="418"/>
        <end position="430"/>
    </location>
</feature>
<dbReference type="EC" id="7.1.1.-" evidence="1"/>
<dbReference type="EMBL" id="AL939120">
    <property type="protein sequence ID" value="CAB44524.1"/>
    <property type="molecule type" value="Genomic_DNA"/>
</dbReference>
<dbReference type="PIR" id="T34617">
    <property type="entry name" value="T34617"/>
</dbReference>
<dbReference type="RefSeq" id="NP_628731.1">
    <property type="nucleotide sequence ID" value="NC_003888.3"/>
</dbReference>
<dbReference type="RefSeq" id="WP_011029736.1">
    <property type="nucleotide sequence ID" value="NZ_VNID01000017.1"/>
</dbReference>
<dbReference type="SMR" id="Q9XAR1"/>
<dbReference type="FunCoup" id="Q9XAR1">
    <property type="interactions" value="80"/>
</dbReference>
<dbReference type="STRING" id="100226.gene:17762214"/>
<dbReference type="PaxDb" id="100226-SCO4569"/>
<dbReference type="GeneID" id="91384452"/>
<dbReference type="KEGG" id="sco:SCO4569"/>
<dbReference type="PATRIC" id="fig|100226.15.peg.4641"/>
<dbReference type="eggNOG" id="COG1005">
    <property type="taxonomic scope" value="Bacteria"/>
</dbReference>
<dbReference type="HOGENOM" id="CLU_015134_0_0_11"/>
<dbReference type="InParanoid" id="Q9XAR1"/>
<dbReference type="OrthoDB" id="9803734at2"/>
<dbReference type="PhylomeDB" id="Q9XAR1"/>
<dbReference type="Proteomes" id="UP000001973">
    <property type="component" value="Chromosome"/>
</dbReference>
<dbReference type="GO" id="GO:0005886">
    <property type="term" value="C:plasma membrane"/>
    <property type="evidence" value="ECO:0007669"/>
    <property type="project" value="UniProtKB-SubCell"/>
</dbReference>
<dbReference type="GO" id="GO:0016655">
    <property type="term" value="F:oxidoreductase activity, acting on NAD(P)H, quinone or similar compound as acceptor"/>
    <property type="evidence" value="ECO:0007669"/>
    <property type="project" value="UniProtKB-UniRule"/>
</dbReference>
<dbReference type="GO" id="GO:0048038">
    <property type="term" value="F:quinone binding"/>
    <property type="evidence" value="ECO:0007669"/>
    <property type="project" value="UniProtKB-KW"/>
</dbReference>
<dbReference type="GO" id="GO:0009060">
    <property type="term" value="P:aerobic respiration"/>
    <property type="evidence" value="ECO:0000318"/>
    <property type="project" value="GO_Central"/>
</dbReference>
<dbReference type="HAMAP" id="MF_01350">
    <property type="entry name" value="NDH1_NuoH"/>
    <property type="match status" value="1"/>
</dbReference>
<dbReference type="InterPro" id="IPR001694">
    <property type="entry name" value="NADH_UbQ_OxRdtase_su1/FPO"/>
</dbReference>
<dbReference type="InterPro" id="IPR018086">
    <property type="entry name" value="NADH_UbQ_OxRdtase_su1_CS"/>
</dbReference>
<dbReference type="NCBIfam" id="NF004741">
    <property type="entry name" value="PRK06076.1-2"/>
    <property type="match status" value="1"/>
</dbReference>
<dbReference type="NCBIfam" id="NF004743">
    <property type="entry name" value="PRK06076.1-4"/>
    <property type="match status" value="1"/>
</dbReference>
<dbReference type="PANTHER" id="PTHR11432">
    <property type="entry name" value="NADH DEHYDROGENASE SUBUNIT 1"/>
    <property type="match status" value="1"/>
</dbReference>
<dbReference type="PANTHER" id="PTHR11432:SF3">
    <property type="entry name" value="NADH-UBIQUINONE OXIDOREDUCTASE CHAIN 1"/>
    <property type="match status" value="1"/>
</dbReference>
<dbReference type="Pfam" id="PF00146">
    <property type="entry name" value="NADHdh"/>
    <property type="match status" value="1"/>
</dbReference>
<dbReference type="PROSITE" id="PS00667">
    <property type="entry name" value="COMPLEX1_ND1_1"/>
    <property type="match status" value="1"/>
</dbReference>
<dbReference type="PROSITE" id="PS00668">
    <property type="entry name" value="COMPLEX1_ND1_2"/>
    <property type="match status" value="1"/>
</dbReference>
<protein>
    <recommendedName>
        <fullName evidence="1">NADH-quinone oxidoreductase subunit H</fullName>
        <ecNumber evidence="1">7.1.1.-</ecNumber>
    </recommendedName>
    <alternativeName>
        <fullName evidence="1">NADH dehydrogenase I subunit H</fullName>
    </alternativeName>
    <alternativeName>
        <fullName evidence="1">NDH-1 subunit H</fullName>
    </alternativeName>
</protein>
<reference key="1">
    <citation type="journal article" date="2002" name="Nature">
        <title>Complete genome sequence of the model actinomycete Streptomyces coelicolor A3(2).</title>
        <authorList>
            <person name="Bentley S.D."/>
            <person name="Chater K.F."/>
            <person name="Cerdeno-Tarraga A.-M."/>
            <person name="Challis G.L."/>
            <person name="Thomson N.R."/>
            <person name="James K.D."/>
            <person name="Harris D.E."/>
            <person name="Quail M.A."/>
            <person name="Kieser H."/>
            <person name="Harper D."/>
            <person name="Bateman A."/>
            <person name="Brown S."/>
            <person name="Chandra G."/>
            <person name="Chen C.W."/>
            <person name="Collins M."/>
            <person name="Cronin A."/>
            <person name="Fraser A."/>
            <person name="Goble A."/>
            <person name="Hidalgo J."/>
            <person name="Hornsby T."/>
            <person name="Howarth S."/>
            <person name="Huang C.-H."/>
            <person name="Kieser T."/>
            <person name="Larke L."/>
            <person name="Murphy L.D."/>
            <person name="Oliver K."/>
            <person name="O'Neil S."/>
            <person name="Rabbinowitsch E."/>
            <person name="Rajandream M.A."/>
            <person name="Rutherford K.M."/>
            <person name="Rutter S."/>
            <person name="Seeger K."/>
            <person name="Saunders D."/>
            <person name="Sharp S."/>
            <person name="Squares R."/>
            <person name="Squares S."/>
            <person name="Taylor K."/>
            <person name="Warren T."/>
            <person name="Wietzorrek A."/>
            <person name="Woodward J.R."/>
            <person name="Barrell B.G."/>
            <person name="Parkhill J."/>
            <person name="Hopwood D.A."/>
        </authorList>
    </citation>
    <scope>NUCLEOTIDE SEQUENCE [LARGE SCALE GENOMIC DNA]</scope>
    <source>
        <strain>ATCC BAA-471 / A3(2) / M145</strain>
    </source>
</reference>
<name>NUOH_STRCO</name>
<accession>Q9XAR1</accession>
<organism>
    <name type="scientific">Streptomyces coelicolor (strain ATCC BAA-471 / A3(2) / M145)</name>
    <dbReference type="NCBI Taxonomy" id="100226"/>
    <lineage>
        <taxon>Bacteria</taxon>
        <taxon>Bacillati</taxon>
        <taxon>Actinomycetota</taxon>
        <taxon>Actinomycetes</taxon>
        <taxon>Kitasatosporales</taxon>
        <taxon>Streptomycetaceae</taxon>
        <taxon>Streptomyces</taxon>
        <taxon>Streptomyces albidoflavus group</taxon>
    </lineage>
</organism>
<sequence length="467" mass="51160">MSPYLAAEDLSMFGTDPWWLVVIKAVFCFAFLMVTVLFSIVWERKVVAWMQLRIGPNRHGPWGMLQSLADGIKLMLKEDVIVKRADKAVYVLAPIVAAIPAFMAIAVIPFGPAGNEVSIFGHRTAMQLTDLPIAMLFILAVASVGIYGIVLAGWSSGSTYPLLGGLRSCAQMISYEIAMGAAFASVFLYSGSMSTSEIVAQQDDRWYIVLLPVSFILYIVTMVGETNRAPFDMPESEGDLVGGFNTEYSSIKFAMFMLAEYVNMVTVSAVATTLFLGGWRAPWPISTFWEGANHGWWPLLWFVVKVQLLLFFFIWLRGTLPRVRYDQLMKLGWKVLIPVSLVWLMLVATVRALRNENYGFSDIALYIGGGVLVLLLLSFLVDMYRDKGGKAADQPAETGTGTGTGTETAFDPMAGGFPVPPMPGQQVPPVPRRRPRRERELIVSGGPDTHSDGPAGGPTDGKEASDG</sequence>
<evidence type="ECO:0000255" key="1">
    <source>
        <dbReference type="HAMAP-Rule" id="MF_01350"/>
    </source>
</evidence>
<evidence type="ECO:0000256" key="2">
    <source>
        <dbReference type="SAM" id="MobiDB-lite"/>
    </source>
</evidence>
<proteinExistence type="inferred from homology"/>